<feature type="chain" id="PRO_0000292543" description="Putative manganese efflux pump MntP">
    <location>
        <begin position="1"/>
        <end position="181"/>
    </location>
</feature>
<feature type="transmembrane region" description="Helical" evidence="1">
    <location>
        <begin position="4"/>
        <end position="24"/>
    </location>
</feature>
<feature type="transmembrane region" description="Helical" evidence="1">
    <location>
        <begin position="31"/>
        <end position="51"/>
    </location>
</feature>
<feature type="transmembrane region" description="Helical" evidence="1">
    <location>
        <begin position="59"/>
        <end position="79"/>
    </location>
</feature>
<feature type="transmembrane region" description="Helical" evidence="1">
    <location>
        <begin position="102"/>
        <end position="122"/>
    </location>
</feature>
<feature type="transmembrane region" description="Helical" evidence="1">
    <location>
        <begin position="129"/>
        <end position="149"/>
    </location>
</feature>
<feature type="transmembrane region" description="Helical" evidence="1">
    <location>
        <begin position="161"/>
        <end position="181"/>
    </location>
</feature>
<protein>
    <recommendedName>
        <fullName evidence="1">Putative manganese efflux pump MntP</fullName>
    </recommendedName>
</protein>
<comment type="function">
    <text evidence="1">Probably functions as a manganese efflux pump.</text>
</comment>
<comment type="subcellular location">
    <subcellularLocation>
        <location evidence="1">Cell inner membrane</location>
        <topology evidence="1">Multi-pass membrane protein</topology>
    </subcellularLocation>
</comment>
<comment type="similarity">
    <text evidence="1">Belongs to the MntP (TC 9.B.29) family.</text>
</comment>
<reference key="1">
    <citation type="journal article" date="2008" name="PLoS Genet.">
        <title>Complete genome sequence of the complex carbohydrate-degrading marine bacterium, Saccharophagus degradans strain 2-40 T.</title>
        <authorList>
            <person name="Weiner R.M."/>
            <person name="Taylor L.E. II"/>
            <person name="Henrissat B."/>
            <person name="Hauser L."/>
            <person name="Land M."/>
            <person name="Coutinho P.M."/>
            <person name="Rancurel C."/>
            <person name="Saunders E.H."/>
            <person name="Longmire A.G."/>
            <person name="Zhang H."/>
            <person name="Bayer E.A."/>
            <person name="Gilbert H.J."/>
            <person name="Larimer F."/>
            <person name="Zhulin I.B."/>
            <person name="Ekborg N.A."/>
            <person name="Lamed R."/>
            <person name="Richardson P.M."/>
            <person name="Borovok I."/>
            <person name="Hutcheson S."/>
        </authorList>
    </citation>
    <scope>NUCLEOTIDE SEQUENCE [LARGE SCALE GENOMIC DNA]</scope>
    <source>
        <strain>2-40 / ATCC 43961 / DSM 17024</strain>
    </source>
</reference>
<dbReference type="EMBL" id="CP000282">
    <property type="protein sequence ID" value="ABD82543.1"/>
    <property type="molecule type" value="Genomic_DNA"/>
</dbReference>
<dbReference type="RefSeq" id="WP_011469759.1">
    <property type="nucleotide sequence ID" value="NC_007912.1"/>
</dbReference>
<dbReference type="STRING" id="203122.Sde_3288"/>
<dbReference type="GeneID" id="98614909"/>
<dbReference type="KEGG" id="sde:Sde_3288"/>
<dbReference type="eggNOG" id="COG1971">
    <property type="taxonomic scope" value="Bacteria"/>
</dbReference>
<dbReference type="HOGENOM" id="CLU_096410_3_0_6"/>
<dbReference type="OrthoDB" id="9811590at2"/>
<dbReference type="Proteomes" id="UP000001947">
    <property type="component" value="Chromosome"/>
</dbReference>
<dbReference type="GO" id="GO:0005886">
    <property type="term" value="C:plasma membrane"/>
    <property type="evidence" value="ECO:0007669"/>
    <property type="project" value="UniProtKB-SubCell"/>
</dbReference>
<dbReference type="GO" id="GO:0005384">
    <property type="term" value="F:manganese ion transmembrane transporter activity"/>
    <property type="evidence" value="ECO:0007669"/>
    <property type="project" value="UniProtKB-UniRule"/>
</dbReference>
<dbReference type="HAMAP" id="MF_01521">
    <property type="entry name" value="MntP_pump"/>
    <property type="match status" value="1"/>
</dbReference>
<dbReference type="InterPro" id="IPR003810">
    <property type="entry name" value="Mntp/YtaF"/>
</dbReference>
<dbReference type="InterPro" id="IPR022929">
    <property type="entry name" value="Put_MntP"/>
</dbReference>
<dbReference type="PANTHER" id="PTHR35529">
    <property type="entry name" value="MANGANESE EFFLUX PUMP MNTP-RELATED"/>
    <property type="match status" value="1"/>
</dbReference>
<dbReference type="PANTHER" id="PTHR35529:SF1">
    <property type="entry name" value="MANGANESE EFFLUX PUMP MNTP-RELATED"/>
    <property type="match status" value="1"/>
</dbReference>
<dbReference type="Pfam" id="PF02659">
    <property type="entry name" value="Mntp"/>
    <property type="match status" value="1"/>
</dbReference>
<proteinExistence type="inferred from homology"/>
<name>MNTP_SACD2</name>
<sequence>MIDVVLLALALSMDAFAVSIGLGAKNKASPVVLGLKAALYFGVFQALMPLIGYLGGKGMLGWLASFAPWVAAGLLALIAAKMIYESFAEGIEEDISQLTHRVLLLLAIATSIDALAAGFALTVLPVAPLVSCALIGVITAIFSFAGVFIGKRAGTWLESKAELAGGLVLLLIALKIIAVAV</sequence>
<keyword id="KW-0997">Cell inner membrane</keyword>
<keyword id="KW-1003">Cell membrane</keyword>
<keyword id="KW-0406">Ion transport</keyword>
<keyword id="KW-0464">Manganese</keyword>
<keyword id="KW-0472">Membrane</keyword>
<keyword id="KW-1185">Reference proteome</keyword>
<keyword id="KW-0812">Transmembrane</keyword>
<keyword id="KW-1133">Transmembrane helix</keyword>
<keyword id="KW-0813">Transport</keyword>
<accession>Q21FI6</accession>
<evidence type="ECO:0000255" key="1">
    <source>
        <dbReference type="HAMAP-Rule" id="MF_01521"/>
    </source>
</evidence>
<organism>
    <name type="scientific">Saccharophagus degradans (strain 2-40 / ATCC 43961 / DSM 17024)</name>
    <dbReference type="NCBI Taxonomy" id="203122"/>
    <lineage>
        <taxon>Bacteria</taxon>
        <taxon>Pseudomonadati</taxon>
        <taxon>Pseudomonadota</taxon>
        <taxon>Gammaproteobacteria</taxon>
        <taxon>Cellvibrionales</taxon>
        <taxon>Cellvibrionaceae</taxon>
        <taxon>Saccharophagus</taxon>
    </lineage>
</organism>
<gene>
    <name evidence="1" type="primary">mntP</name>
    <name type="ordered locus">Sde_3288</name>
</gene>